<comment type="catalytic activity">
    <reaction evidence="1">
        <text>GTP + H2O = 7,8-dihydroneopterin 3'-triphosphate + formate + H(+)</text>
        <dbReference type="Rhea" id="RHEA:17473"/>
        <dbReference type="ChEBI" id="CHEBI:15377"/>
        <dbReference type="ChEBI" id="CHEBI:15378"/>
        <dbReference type="ChEBI" id="CHEBI:15740"/>
        <dbReference type="ChEBI" id="CHEBI:37565"/>
        <dbReference type="ChEBI" id="CHEBI:58462"/>
        <dbReference type="EC" id="3.5.4.16"/>
    </reaction>
</comment>
<comment type="pathway">
    <text evidence="1">Cofactor biosynthesis; 7,8-dihydroneopterin triphosphate biosynthesis; 7,8-dihydroneopterin triphosphate from GTP: step 1/1.</text>
</comment>
<comment type="subunit">
    <text evidence="1">Homomer.</text>
</comment>
<comment type="similarity">
    <text evidence="1">Belongs to the GTP cyclohydrolase I family.</text>
</comment>
<feature type="chain" id="PRO_1000100159" description="GTP cyclohydrolase 1">
    <location>
        <begin position="1"/>
        <end position="218"/>
    </location>
</feature>
<feature type="binding site" evidence="1">
    <location>
        <position position="109"/>
    </location>
    <ligand>
        <name>Zn(2+)</name>
        <dbReference type="ChEBI" id="CHEBI:29105"/>
    </ligand>
</feature>
<feature type="binding site" evidence="1">
    <location>
        <position position="112"/>
    </location>
    <ligand>
        <name>Zn(2+)</name>
        <dbReference type="ChEBI" id="CHEBI:29105"/>
    </ligand>
</feature>
<feature type="binding site" evidence="1">
    <location>
        <position position="180"/>
    </location>
    <ligand>
        <name>Zn(2+)</name>
        <dbReference type="ChEBI" id="CHEBI:29105"/>
    </ligand>
</feature>
<name>GCH1_ACTPJ</name>
<proteinExistence type="inferred from homology"/>
<gene>
    <name evidence="1" type="primary">folE</name>
    <name type="ordered locus">APJL_0915</name>
</gene>
<keyword id="KW-0342">GTP-binding</keyword>
<keyword id="KW-0378">Hydrolase</keyword>
<keyword id="KW-0479">Metal-binding</keyword>
<keyword id="KW-0547">Nucleotide-binding</keyword>
<keyword id="KW-0554">One-carbon metabolism</keyword>
<keyword id="KW-0862">Zinc</keyword>
<accession>B0BPI8</accession>
<evidence type="ECO:0000255" key="1">
    <source>
        <dbReference type="HAMAP-Rule" id="MF_00223"/>
    </source>
</evidence>
<organism>
    <name type="scientific">Actinobacillus pleuropneumoniae serotype 3 (strain JL03)</name>
    <dbReference type="NCBI Taxonomy" id="434271"/>
    <lineage>
        <taxon>Bacteria</taxon>
        <taxon>Pseudomonadati</taxon>
        <taxon>Pseudomonadota</taxon>
        <taxon>Gammaproteobacteria</taxon>
        <taxon>Pasteurellales</taxon>
        <taxon>Pasteurellaceae</taxon>
        <taxon>Actinobacillus</taxon>
    </lineage>
</organism>
<protein>
    <recommendedName>
        <fullName evidence="1">GTP cyclohydrolase 1</fullName>
        <ecNumber evidence="1">3.5.4.16</ecNumber>
    </recommendedName>
    <alternativeName>
        <fullName evidence="1">GTP cyclohydrolase I</fullName>
        <shortName evidence="1">GTP-CH-I</shortName>
    </alternativeName>
</protein>
<dbReference type="EC" id="3.5.4.16" evidence="1"/>
<dbReference type="EMBL" id="CP000687">
    <property type="protein sequence ID" value="ABY69473.1"/>
    <property type="molecule type" value="Genomic_DNA"/>
</dbReference>
<dbReference type="RefSeq" id="WP_005601234.1">
    <property type="nucleotide sequence ID" value="NC_010278.1"/>
</dbReference>
<dbReference type="SMR" id="B0BPI8"/>
<dbReference type="KEGG" id="apj:APJL_0915"/>
<dbReference type="HOGENOM" id="CLU_049768_3_2_6"/>
<dbReference type="UniPathway" id="UPA00848">
    <property type="reaction ID" value="UER00151"/>
</dbReference>
<dbReference type="Proteomes" id="UP000008547">
    <property type="component" value="Chromosome"/>
</dbReference>
<dbReference type="GO" id="GO:0005737">
    <property type="term" value="C:cytoplasm"/>
    <property type="evidence" value="ECO:0007669"/>
    <property type="project" value="TreeGrafter"/>
</dbReference>
<dbReference type="GO" id="GO:0005525">
    <property type="term" value="F:GTP binding"/>
    <property type="evidence" value="ECO:0007669"/>
    <property type="project" value="UniProtKB-KW"/>
</dbReference>
<dbReference type="GO" id="GO:0003934">
    <property type="term" value="F:GTP cyclohydrolase I activity"/>
    <property type="evidence" value="ECO:0007669"/>
    <property type="project" value="UniProtKB-UniRule"/>
</dbReference>
<dbReference type="GO" id="GO:0008270">
    <property type="term" value="F:zinc ion binding"/>
    <property type="evidence" value="ECO:0007669"/>
    <property type="project" value="UniProtKB-UniRule"/>
</dbReference>
<dbReference type="GO" id="GO:0006730">
    <property type="term" value="P:one-carbon metabolic process"/>
    <property type="evidence" value="ECO:0007669"/>
    <property type="project" value="UniProtKB-UniRule"/>
</dbReference>
<dbReference type="GO" id="GO:0006729">
    <property type="term" value="P:tetrahydrobiopterin biosynthetic process"/>
    <property type="evidence" value="ECO:0007669"/>
    <property type="project" value="TreeGrafter"/>
</dbReference>
<dbReference type="GO" id="GO:0046654">
    <property type="term" value="P:tetrahydrofolate biosynthetic process"/>
    <property type="evidence" value="ECO:0007669"/>
    <property type="project" value="UniProtKB-UniRule"/>
</dbReference>
<dbReference type="CDD" id="cd00642">
    <property type="entry name" value="GTP_cyclohydro1"/>
    <property type="match status" value="1"/>
</dbReference>
<dbReference type="FunFam" id="3.30.1130.10:FF:000001">
    <property type="entry name" value="GTP cyclohydrolase 1"/>
    <property type="match status" value="1"/>
</dbReference>
<dbReference type="Gene3D" id="1.10.286.10">
    <property type="match status" value="1"/>
</dbReference>
<dbReference type="Gene3D" id="3.30.1130.10">
    <property type="match status" value="1"/>
</dbReference>
<dbReference type="HAMAP" id="MF_00223">
    <property type="entry name" value="FolE"/>
    <property type="match status" value="1"/>
</dbReference>
<dbReference type="InterPro" id="IPR043133">
    <property type="entry name" value="GTP-CH-I_C/QueF"/>
</dbReference>
<dbReference type="InterPro" id="IPR043134">
    <property type="entry name" value="GTP-CH-I_N"/>
</dbReference>
<dbReference type="InterPro" id="IPR001474">
    <property type="entry name" value="GTP_CycHdrlase_I"/>
</dbReference>
<dbReference type="InterPro" id="IPR018234">
    <property type="entry name" value="GTP_CycHdrlase_I_CS"/>
</dbReference>
<dbReference type="InterPro" id="IPR020602">
    <property type="entry name" value="GTP_CycHdrlase_I_dom"/>
</dbReference>
<dbReference type="NCBIfam" id="TIGR00063">
    <property type="entry name" value="folE"/>
    <property type="match status" value="1"/>
</dbReference>
<dbReference type="NCBIfam" id="NF006824">
    <property type="entry name" value="PRK09347.1-1"/>
    <property type="match status" value="1"/>
</dbReference>
<dbReference type="NCBIfam" id="NF006825">
    <property type="entry name" value="PRK09347.1-2"/>
    <property type="match status" value="1"/>
</dbReference>
<dbReference type="NCBIfam" id="NF006826">
    <property type="entry name" value="PRK09347.1-3"/>
    <property type="match status" value="1"/>
</dbReference>
<dbReference type="PANTHER" id="PTHR11109:SF7">
    <property type="entry name" value="GTP CYCLOHYDROLASE 1"/>
    <property type="match status" value="1"/>
</dbReference>
<dbReference type="PANTHER" id="PTHR11109">
    <property type="entry name" value="GTP CYCLOHYDROLASE I"/>
    <property type="match status" value="1"/>
</dbReference>
<dbReference type="Pfam" id="PF01227">
    <property type="entry name" value="GTP_cyclohydroI"/>
    <property type="match status" value="1"/>
</dbReference>
<dbReference type="SUPFAM" id="SSF55620">
    <property type="entry name" value="Tetrahydrobiopterin biosynthesis enzymes-like"/>
    <property type="match status" value="1"/>
</dbReference>
<dbReference type="PROSITE" id="PS00859">
    <property type="entry name" value="GTP_CYCLOHYDROL_1_1"/>
    <property type="match status" value="1"/>
</dbReference>
<sequence>MSIISAEAQKVREALIAKGIETPTVQLTKDKDSRRAEIQQHMRSVLELLGLDLQDDSLEETPHRLAKMYVDEIFSGLDYATFPKITNIENRMKVSEMVLVDDITLTSTCEHHFVTIDGKVAVAYYPKKWVIGLSKINRVVQFFAQRPQVQERFTEQILTAFQTILETDDVAVFVKATHFCVKCRGVKDTNSYTVTSAFGGVFLEDRETRKEFLGLINK</sequence>
<reference key="1">
    <citation type="journal article" date="2008" name="PLoS ONE">
        <title>Genome biology of Actinobacillus pleuropneumoniae JL03, an isolate of serotype 3 prevalent in China.</title>
        <authorList>
            <person name="Xu Z."/>
            <person name="Zhou Y."/>
            <person name="Li L."/>
            <person name="Zhou R."/>
            <person name="Xiao S."/>
            <person name="Wan Y."/>
            <person name="Zhang S."/>
            <person name="Wang K."/>
            <person name="Li W."/>
            <person name="Li L."/>
            <person name="Jin H."/>
            <person name="Kang M."/>
            <person name="Dalai B."/>
            <person name="Li T."/>
            <person name="Liu L."/>
            <person name="Cheng Y."/>
            <person name="Zhang L."/>
            <person name="Xu T."/>
            <person name="Zheng H."/>
            <person name="Pu S."/>
            <person name="Wang B."/>
            <person name="Gu W."/>
            <person name="Zhang X.L."/>
            <person name="Zhu G.-F."/>
            <person name="Wang S."/>
            <person name="Zhao G.-P."/>
            <person name="Chen H."/>
        </authorList>
    </citation>
    <scope>NUCLEOTIDE SEQUENCE [LARGE SCALE GENOMIC DNA]</scope>
    <source>
        <strain>JL03</strain>
    </source>
</reference>